<proteinExistence type="inferred from homology"/>
<evidence type="ECO:0000255" key="1">
    <source>
        <dbReference type="HAMAP-Rule" id="MF_00210"/>
    </source>
</evidence>
<sequence>MKERTIQPVNNGLNGNITIPGDKSISHRAVMFGSIAEGKTTIKGFLSGADCLSTISCFKEMGVEITQNGDEVTVVGKGLEGLQEPKAVLDVGNSGTTIRLMSGILANTPFFSCVQGDESIAKRPMKRVTNPLKQMGANIDGREEGTFTPLTIRGGDLKAIEYISPVASAQVKSAILLAGLRAEGVTAVTEPHISRDHTERMLEAFGVKVTREGKTVKLSGGQKLTATDIQVPGDVSSAAFFLVAGAIIPNSKLILQNVGMNPTRTGIIDVLEKMGATFTIEPINEGASEPAANITIETSSLKGIEIGGDIIPRLIDEIPVIALAATQAEGITVIRDAHELKVKETNRIDTVVAELTKLGARIEATDDGMIIYGKSALKGNTVNSYGDHRIGMMLAIAGCLAEGKIIIEDAEAVGVSYPTFFDELQKLAK</sequence>
<name>AROA_BACC2</name>
<feature type="chain" id="PRO_1000118776" description="3-phosphoshikimate 1-carboxyvinyltransferase">
    <location>
        <begin position="1"/>
        <end position="429"/>
    </location>
</feature>
<feature type="active site" description="Proton acceptor" evidence="1">
    <location>
        <position position="316"/>
    </location>
</feature>
<feature type="binding site" evidence="1">
    <location>
        <position position="23"/>
    </location>
    <ligand>
        <name>3-phosphoshikimate</name>
        <dbReference type="ChEBI" id="CHEBI:145989"/>
    </ligand>
</feature>
<feature type="binding site" evidence="1">
    <location>
        <position position="23"/>
    </location>
    <ligand>
        <name>phosphoenolpyruvate</name>
        <dbReference type="ChEBI" id="CHEBI:58702"/>
    </ligand>
</feature>
<feature type="binding site" evidence="1">
    <location>
        <position position="24"/>
    </location>
    <ligand>
        <name>3-phosphoshikimate</name>
        <dbReference type="ChEBI" id="CHEBI:145989"/>
    </ligand>
</feature>
<feature type="binding site" evidence="1">
    <location>
        <position position="28"/>
    </location>
    <ligand>
        <name>3-phosphoshikimate</name>
        <dbReference type="ChEBI" id="CHEBI:145989"/>
    </ligand>
</feature>
<feature type="binding site" evidence="1">
    <location>
        <position position="95"/>
    </location>
    <ligand>
        <name>phosphoenolpyruvate</name>
        <dbReference type="ChEBI" id="CHEBI:58702"/>
    </ligand>
</feature>
<feature type="binding site" evidence="1">
    <location>
        <position position="123"/>
    </location>
    <ligand>
        <name>phosphoenolpyruvate</name>
        <dbReference type="ChEBI" id="CHEBI:58702"/>
    </ligand>
</feature>
<feature type="binding site" evidence="1">
    <location>
        <position position="168"/>
    </location>
    <ligand>
        <name>3-phosphoshikimate</name>
        <dbReference type="ChEBI" id="CHEBI:145989"/>
    </ligand>
</feature>
<feature type="binding site" evidence="1">
    <location>
        <position position="170"/>
    </location>
    <ligand>
        <name>3-phosphoshikimate</name>
        <dbReference type="ChEBI" id="CHEBI:145989"/>
    </ligand>
</feature>
<feature type="binding site" evidence="1">
    <location>
        <position position="170"/>
    </location>
    <ligand>
        <name>phosphoenolpyruvate</name>
        <dbReference type="ChEBI" id="CHEBI:58702"/>
    </ligand>
</feature>
<feature type="binding site" evidence="1">
    <location>
        <position position="316"/>
    </location>
    <ligand>
        <name>3-phosphoshikimate</name>
        <dbReference type="ChEBI" id="CHEBI:145989"/>
    </ligand>
</feature>
<feature type="binding site" evidence="1">
    <location>
        <position position="343"/>
    </location>
    <ligand>
        <name>3-phosphoshikimate</name>
        <dbReference type="ChEBI" id="CHEBI:145989"/>
    </ligand>
</feature>
<feature type="binding site" evidence="1">
    <location>
        <position position="347"/>
    </location>
    <ligand>
        <name>phosphoenolpyruvate</name>
        <dbReference type="ChEBI" id="CHEBI:58702"/>
    </ligand>
</feature>
<feature type="binding site" evidence="1">
    <location>
        <position position="389"/>
    </location>
    <ligand>
        <name>phosphoenolpyruvate</name>
        <dbReference type="ChEBI" id="CHEBI:58702"/>
    </ligand>
</feature>
<gene>
    <name evidence="1" type="primary">aroA</name>
    <name type="ordered locus">BCG9842_B2284</name>
</gene>
<dbReference type="EC" id="2.5.1.19" evidence="1"/>
<dbReference type="EMBL" id="CP001186">
    <property type="protein sequence ID" value="ACK93840.1"/>
    <property type="molecule type" value="Genomic_DNA"/>
</dbReference>
<dbReference type="RefSeq" id="WP_000664636.1">
    <property type="nucleotide sequence ID" value="NC_011772.1"/>
</dbReference>
<dbReference type="SMR" id="B7ILG9"/>
<dbReference type="KEGG" id="bcg:BCG9842_B2284"/>
<dbReference type="HOGENOM" id="CLU_024321_0_1_9"/>
<dbReference type="UniPathway" id="UPA00053">
    <property type="reaction ID" value="UER00089"/>
</dbReference>
<dbReference type="Proteomes" id="UP000006744">
    <property type="component" value="Chromosome"/>
</dbReference>
<dbReference type="GO" id="GO:0005737">
    <property type="term" value="C:cytoplasm"/>
    <property type="evidence" value="ECO:0007669"/>
    <property type="project" value="UniProtKB-SubCell"/>
</dbReference>
<dbReference type="GO" id="GO:0003866">
    <property type="term" value="F:3-phosphoshikimate 1-carboxyvinyltransferase activity"/>
    <property type="evidence" value="ECO:0007669"/>
    <property type="project" value="UniProtKB-UniRule"/>
</dbReference>
<dbReference type="GO" id="GO:0008652">
    <property type="term" value="P:amino acid biosynthetic process"/>
    <property type="evidence" value="ECO:0007669"/>
    <property type="project" value="UniProtKB-KW"/>
</dbReference>
<dbReference type="GO" id="GO:0009073">
    <property type="term" value="P:aromatic amino acid family biosynthetic process"/>
    <property type="evidence" value="ECO:0007669"/>
    <property type="project" value="UniProtKB-KW"/>
</dbReference>
<dbReference type="GO" id="GO:0009423">
    <property type="term" value="P:chorismate biosynthetic process"/>
    <property type="evidence" value="ECO:0007669"/>
    <property type="project" value="UniProtKB-UniRule"/>
</dbReference>
<dbReference type="CDD" id="cd01556">
    <property type="entry name" value="EPSP_synthase"/>
    <property type="match status" value="1"/>
</dbReference>
<dbReference type="FunFam" id="3.65.10.10:FF:000005">
    <property type="entry name" value="3-phosphoshikimate 1-carboxyvinyltransferase"/>
    <property type="match status" value="1"/>
</dbReference>
<dbReference type="FunFam" id="3.65.10.10:FF:000006">
    <property type="entry name" value="3-phosphoshikimate 1-carboxyvinyltransferase"/>
    <property type="match status" value="1"/>
</dbReference>
<dbReference type="Gene3D" id="3.65.10.10">
    <property type="entry name" value="Enolpyruvate transferase domain"/>
    <property type="match status" value="2"/>
</dbReference>
<dbReference type="HAMAP" id="MF_00210">
    <property type="entry name" value="EPSP_synth"/>
    <property type="match status" value="1"/>
</dbReference>
<dbReference type="InterPro" id="IPR001986">
    <property type="entry name" value="Enolpyruvate_Tfrase_dom"/>
</dbReference>
<dbReference type="InterPro" id="IPR036968">
    <property type="entry name" value="Enolpyruvate_Tfrase_sf"/>
</dbReference>
<dbReference type="InterPro" id="IPR006264">
    <property type="entry name" value="EPSP_synthase"/>
</dbReference>
<dbReference type="InterPro" id="IPR023193">
    <property type="entry name" value="EPSP_synthase_CS"/>
</dbReference>
<dbReference type="InterPro" id="IPR013792">
    <property type="entry name" value="RNA3'P_cycl/enolpyr_Trfase_a/b"/>
</dbReference>
<dbReference type="NCBIfam" id="TIGR01356">
    <property type="entry name" value="aroA"/>
    <property type="match status" value="1"/>
</dbReference>
<dbReference type="PANTHER" id="PTHR21090">
    <property type="entry name" value="AROM/DEHYDROQUINATE SYNTHASE"/>
    <property type="match status" value="1"/>
</dbReference>
<dbReference type="PANTHER" id="PTHR21090:SF5">
    <property type="entry name" value="PENTAFUNCTIONAL AROM POLYPEPTIDE"/>
    <property type="match status" value="1"/>
</dbReference>
<dbReference type="Pfam" id="PF00275">
    <property type="entry name" value="EPSP_synthase"/>
    <property type="match status" value="1"/>
</dbReference>
<dbReference type="PIRSF" id="PIRSF000505">
    <property type="entry name" value="EPSPS"/>
    <property type="match status" value="1"/>
</dbReference>
<dbReference type="SUPFAM" id="SSF55205">
    <property type="entry name" value="EPT/RTPC-like"/>
    <property type="match status" value="1"/>
</dbReference>
<dbReference type="PROSITE" id="PS00104">
    <property type="entry name" value="EPSP_SYNTHASE_1"/>
    <property type="match status" value="1"/>
</dbReference>
<dbReference type="PROSITE" id="PS00885">
    <property type="entry name" value="EPSP_SYNTHASE_2"/>
    <property type="match status" value="1"/>
</dbReference>
<comment type="function">
    <text evidence="1">Catalyzes the transfer of the enolpyruvyl moiety of phosphoenolpyruvate (PEP) to the 5-hydroxyl of shikimate-3-phosphate (S3P) to produce enolpyruvyl shikimate-3-phosphate and inorganic phosphate.</text>
</comment>
<comment type="catalytic activity">
    <reaction evidence="1">
        <text>3-phosphoshikimate + phosphoenolpyruvate = 5-O-(1-carboxyvinyl)-3-phosphoshikimate + phosphate</text>
        <dbReference type="Rhea" id="RHEA:21256"/>
        <dbReference type="ChEBI" id="CHEBI:43474"/>
        <dbReference type="ChEBI" id="CHEBI:57701"/>
        <dbReference type="ChEBI" id="CHEBI:58702"/>
        <dbReference type="ChEBI" id="CHEBI:145989"/>
        <dbReference type="EC" id="2.5.1.19"/>
    </reaction>
    <physiologicalReaction direction="left-to-right" evidence="1">
        <dbReference type="Rhea" id="RHEA:21257"/>
    </physiologicalReaction>
</comment>
<comment type="pathway">
    <text evidence="1">Metabolic intermediate biosynthesis; chorismate biosynthesis; chorismate from D-erythrose 4-phosphate and phosphoenolpyruvate: step 6/7.</text>
</comment>
<comment type="subunit">
    <text evidence="1">Monomer.</text>
</comment>
<comment type="subcellular location">
    <subcellularLocation>
        <location evidence="1">Cytoplasm</location>
    </subcellularLocation>
</comment>
<comment type="similarity">
    <text evidence="1">Belongs to the EPSP synthase family.</text>
</comment>
<reference key="1">
    <citation type="submission" date="2008-10" db="EMBL/GenBank/DDBJ databases">
        <title>Genome sequence of Bacillus cereus G9842.</title>
        <authorList>
            <person name="Dodson R.J."/>
            <person name="Durkin A.S."/>
            <person name="Rosovitz M.J."/>
            <person name="Rasko D.A."/>
            <person name="Hoffmaster A."/>
            <person name="Ravel J."/>
            <person name="Sutton G."/>
        </authorList>
    </citation>
    <scope>NUCLEOTIDE SEQUENCE [LARGE SCALE GENOMIC DNA]</scope>
    <source>
        <strain>G9842</strain>
    </source>
</reference>
<accession>B7ILG9</accession>
<protein>
    <recommendedName>
        <fullName evidence="1">3-phosphoshikimate 1-carboxyvinyltransferase</fullName>
        <ecNumber evidence="1">2.5.1.19</ecNumber>
    </recommendedName>
    <alternativeName>
        <fullName evidence="1">5-enolpyruvylshikimate-3-phosphate synthase</fullName>
        <shortName evidence="1">EPSP synthase</shortName>
        <shortName evidence="1">EPSPS</shortName>
    </alternativeName>
</protein>
<organism>
    <name type="scientific">Bacillus cereus (strain G9842)</name>
    <dbReference type="NCBI Taxonomy" id="405531"/>
    <lineage>
        <taxon>Bacteria</taxon>
        <taxon>Bacillati</taxon>
        <taxon>Bacillota</taxon>
        <taxon>Bacilli</taxon>
        <taxon>Bacillales</taxon>
        <taxon>Bacillaceae</taxon>
        <taxon>Bacillus</taxon>
        <taxon>Bacillus cereus group</taxon>
    </lineage>
</organism>
<keyword id="KW-0028">Amino-acid biosynthesis</keyword>
<keyword id="KW-0057">Aromatic amino acid biosynthesis</keyword>
<keyword id="KW-0963">Cytoplasm</keyword>
<keyword id="KW-0808">Transferase</keyword>